<keyword id="KW-0687">Ribonucleoprotein</keyword>
<keyword id="KW-0689">Ribosomal protein</keyword>
<evidence type="ECO:0000255" key="1">
    <source>
        <dbReference type="HAMAP-Rule" id="MF_00374"/>
    </source>
</evidence>
<evidence type="ECO:0000305" key="2"/>
<dbReference type="EMBL" id="AP010904">
    <property type="protein sequence ID" value="BAH74719.1"/>
    <property type="molecule type" value="Genomic_DNA"/>
</dbReference>
<dbReference type="RefSeq" id="WP_015859936.1">
    <property type="nucleotide sequence ID" value="NC_012796.1"/>
</dbReference>
<dbReference type="SMR" id="C4XLY1"/>
<dbReference type="STRING" id="573370.DMR_12280"/>
<dbReference type="KEGG" id="dma:DMR_12280"/>
<dbReference type="eggNOG" id="COG0255">
    <property type="taxonomic scope" value="Bacteria"/>
</dbReference>
<dbReference type="HOGENOM" id="CLU_158491_5_2_7"/>
<dbReference type="OrthoDB" id="9815192at2"/>
<dbReference type="Proteomes" id="UP000009071">
    <property type="component" value="Chromosome"/>
</dbReference>
<dbReference type="GO" id="GO:0022625">
    <property type="term" value="C:cytosolic large ribosomal subunit"/>
    <property type="evidence" value="ECO:0007669"/>
    <property type="project" value="TreeGrafter"/>
</dbReference>
<dbReference type="GO" id="GO:0003735">
    <property type="term" value="F:structural constituent of ribosome"/>
    <property type="evidence" value="ECO:0007669"/>
    <property type="project" value="InterPro"/>
</dbReference>
<dbReference type="GO" id="GO:0006412">
    <property type="term" value="P:translation"/>
    <property type="evidence" value="ECO:0007669"/>
    <property type="project" value="UniProtKB-UniRule"/>
</dbReference>
<dbReference type="CDD" id="cd00427">
    <property type="entry name" value="Ribosomal_L29_HIP"/>
    <property type="match status" value="1"/>
</dbReference>
<dbReference type="FunFam" id="1.10.287.310:FF:000001">
    <property type="entry name" value="50S ribosomal protein L29"/>
    <property type="match status" value="1"/>
</dbReference>
<dbReference type="Gene3D" id="1.10.287.310">
    <property type="match status" value="1"/>
</dbReference>
<dbReference type="HAMAP" id="MF_00374">
    <property type="entry name" value="Ribosomal_uL29"/>
    <property type="match status" value="1"/>
</dbReference>
<dbReference type="InterPro" id="IPR050063">
    <property type="entry name" value="Ribosomal_protein_uL29"/>
</dbReference>
<dbReference type="InterPro" id="IPR001854">
    <property type="entry name" value="Ribosomal_uL29"/>
</dbReference>
<dbReference type="InterPro" id="IPR018254">
    <property type="entry name" value="Ribosomal_uL29_CS"/>
</dbReference>
<dbReference type="InterPro" id="IPR036049">
    <property type="entry name" value="Ribosomal_uL29_sf"/>
</dbReference>
<dbReference type="NCBIfam" id="TIGR00012">
    <property type="entry name" value="L29"/>
    <property type="match status" value="1"/>
</dbReference>
<dbReference type="PANTHER" id="PTHR10916">
    <property type="entry name" value="60S RIBOSOMAL PROTEIN L35/50S RIBOSOMAL PROTEIN L29"/>
    <property type="match status" value="1"/>
</dbReference>
<dbReference type="PANTHER" id="PTHR10916:SF0">
    <property type="entry name" value="LARGE RIBOSOMAL SUBUNIT PROTEIN UL29C"/>
    <property type="match status" value="1"/>
</dbReference>
<dbReference type="Pfam" id="PF00831">
    <property type="entry name" value="Ribosomal_L29"/>
    <property type="match status" value="1"/>
</dbReference>
<dbReference type="SUPFAM" id="SSF46561">
    <property type="entry name" value="Ribosomal protein L29 (L29p)"/>
    <property type="match status" value="1"/>
</dbReference>
<dbReference type="PROSITE" id="PS00579">
    <property type="entry name" value="RIBOSOMAL_L29"/>
    <property type="match status" value="1"/>
</dbReference>
<organism>
    <name type="scientific">Solidesulfovibrio magneticus (strain ATCC 700980 / DSM 13731 / RS-1)</name>
    <name type="common">Desulfovibrio magneticus</name>
    <dbReference type="NCBI Taxonomy" id="573370"/>
    <lineage>
        <taxon>Bacteria</taxon>
        <taxon>Pseudomonadati</taxon>
        <taxon>Thermodesulfobacteriota</taxon>
        <taxon>Desulfovibrionia</taxon>
        <taxon>Desulfovibrionales</taxon>
        <taxon>Desulfovibrionaceae</taxon>
        <taxon>Solidesulfovibrio</taxon>
    </lineage>
</organism>
<accession>C4XLY1</accession>
<proteinExistence type="inferred from homology"/>
<name>RL29_SOLM1</name>
<reference key="1">
    <citation type="journal article" date="2009" name="Genome Res.">
        <title>Whole genome sequence of Desulfovibrio magneticus strain RS-1 revealed common gene clusters in magnetotactic bacteria.</title>
        <authorList>
            <person name="Nakazawa H."/>
            <person name="Arakaki A."/>
            <person name="Narita-Yamada S."/>
            <person name="Yashiro I."/>
            <person name="Jinno K."/>
            <person name="Aoki N."/>
            <person name="Tsuruyama A."/>
            <person name="Okamura Y."/>
            <person name="Tanikawa S."/>
            <person name="Fujita N."/>
            <person name="Takeyama H."/>
            <person name="Matsunaga T."/>
        </authorList>
    </citation>
    <scope>NUCLEOTIDE SEQUENCE [LARGE SCALE GENOMIC DNA]</scope>
    <source>
        <strain>ATCC 700980 / DSM 13731 / RS-1</strain>
    </source>
</reference>
<feature type="chain" id="PRO_1000205621" description="Large ribosomal subunit protein uL29">
    <location>
        <begin position="1"/>
        <end position="64"/>
    </location>
</feature>
<comment type="similarity">
    <text evidence="1">Belongs to the universal ribosomal protein uL29 family.</text>
</comment>
<sequence>MKTAELRDLDIEALGKKLGESREELFKLRFQHATAQLEKTHRLREVRKDIARIMTVQTEKKRQG</sequence>
<protein>
    <recommendedName>
        <fullName evidence="1">Large ribosomal subunit protein uL29</fullName>
    </recommendedName>
    <alternativeName>
        <fullName evidence="2">50S ribosomal protein L29</fullName>
    </alternativeName>
</protein>
<gene>
    <name evidence="1" type="primary">rpmC</name>
    <name type="ordered locus">DMR_12280</name>
</gene>